<organism>
    <name type="scientific">Ureaplasma urealyticum serovar 10 (strain ATCC 33699 / Western)</name>
    <dbReference type="NCBI Taxonomy" id="565575"/>
    <lineage>
        <taxon>Bacteria</taxon>
        <taxon>Bacillati</taxon>
        <taxon>Mycoplasmatota</taxon>
        <taxon>Mycoplasmoidales</taxon>
        <taxon>Mycoplasmoidaceae</taxon>
        <taxon>Ureaplasma</taxon>
    </lineage>
</organism>
<protein>
    <recommendedName>
        <fullName evidence="1">Endoribonuclease YbeY</fullName>
        <ecNumber evidence="1">3.1.-.-</ecNumber>
    </recommendedName>
</protein>
<feature type="chain" id="PRO_1000089225" description="Endoribonuclease YbeY">
    <location>
        <begin position="1"/>
        <end position="155"/>
    </location>
</feature>
<feature type="binding site" evidence="1">
    <location>
        <position position="113"/>
    </location>
    <ligand>
        <name>Zn(2+)</name>
        <dbReference type="ChEBI" id="CHEBI:29105"/>
        <note>catalytic</note>
    </ligand>
</feature>
<feature type="binding site" evidence="1">
    <location>
        <position position="117"/>
    </location>
    <ligand>
        <name>Zn(2+)</name>
        <dbReference type="ChEBI" id="CHEBI:29105"/>
        <note>catalytic</note>
    </ligand>
</feature>
<feature type="binding site" evidence="1">
    <location>
        <position position="123"/>
    </location>
    <ligand>
        <name>Zn(2+)</name>
        <dbReference type="ChEBI" id="CHEBI:29105"/>
        <note>catalytic</note>
    </ligand>
</feature>
<reference key="1">
    <citation type="submission" date="2008-10" db="EMBL/GenBank/DDBJ databases">
        <title>Genome sequence of Ureaplasma urealyticum serovar 10 ATCC-33699.</title>
        <authorList>
            <person name="Shrivastava S."/>
            <person name="Methe B.A."/>
            <person name="Glass J."/>
            <person name="White K."/>
            <person name="Duffy L.B."/>
        </authorList>
    </citation>
    <scope>NUCLEOTIDE SEQUENCE [LARGE SCALE GENOMIC DNA]</scope>
    <source>
        <strain>ATCC 33699 / Western</strain>
    </source>
</reference>
<gene>
    <name evidence="1" type="primary">ybeY</name>
    <name type="ordered locus">UUR10_0561</name>
</gene>
<dbReference type="EC" id="3.1.-.-" evidence="1"/>
<dbReference type="EMBL" id="CP001184">
    <property type="protein sequence ID" value="ACI59886.1"/>
    <property type="molecule type" value="Genomic_DNA"/>
</dbReference>
<dbReference type="RefSeq" id="WP_004026175.1">
    <property type="nucleotide sequence ID" value="NC_011374.1"/>
</dbReference>
<dbReference type="SMR" id="B5ZBZ7"/>
<dbReference type="STRING" id="565575.UUR10_0561"/>
<dbReference type="GeneID" id="93849018"/>
<dbReference type="KEGG" id="uue:UUR10_0561"/>
<dbReference type="eggNOG" id="COG0319">
    <property type="taxonomic scope" value="Bacteria"/>
</dbReference>
<dbReference type="HOGENOM" id="CLU_106710_3_0_14"/>
<dbReference type="OrthoDB" id="9807740at2"/>
<dbReference type="Proteomes" id="UP000002018">
    <property type="component" value="Chromosome"/>
</dbReference>
<dbReference type="GO" id="GO:0005737">
    <property type="term" value="C:cytoplasm"/>
    <property type="evidence" value="ECO:0007669"/>
    <property type="project" value="UniProtKB-SubCell"/>
</dbReference>
<dbReference type="GO" id="GO:0004222">
    <property type="term" value="F:metalloendopeptidase activity"/>
    <property type="evidence" value="ECO:0007669"/>
    <property type="project" value="InterPro"/>
</dbReference>
<dbReference type="GO" id="GO:0004521">
    <property type="term" value="F:RNA endonuclease activity"/>
    <property type="evidence" value="ECO:0007669"/>
    <property type="project" value="UniProtKB-UniRule"/>
</dbReference>
<dbReference type="GO" id="GO:0008270">
    <property type="term" value="F:zinc ion binding"/>
    <property type="evidence" value="ECO:0007669"/>
    <property type="project" value="UniProtKB-UniRule"/>
</dbReference>
<dbReference type="GO" id="GO:0006364">
    <property type="term" value="P:rRNA processing"/>
    <property type="evidence" value="ECO:0007669"/>
    <property type="project" value="UniProtKB-UniRule"/>
</dbReference>
<dbReference type="Gene3D" id="3.40.390.30">
    <property type="entry name" value="Metalloproteases ('zincins'), catalytic domain"/>
    <property type="match status" value="1"/>
</dbReference>
<dbReference type="HAMAP" id="MF_00009">
    <property type="entry name" value="Endoribonucl_YbeY"/>
    <property type="match status" value="1"/>
</dbReference>
<dbReference type="InterPro" id="IPR023091">
    <property type="entry name" value="MetalPrtase_cat_dom_sf_prd"/>
</dbReference>
<dbReference type="InterPro" id="IPR002036">
    <property type="entry name" value="YbeY"/>
</dbReference>
<dbReference type="InterPro" id="IPR020549">
    <property type="entry name" value="YbeY_CS"/>
</dbReference>
<dbReference type="NCBIfam" id="TIGR00043">
    <property type="entry name" value="rRNA maturation RNase YbeY"/>
    <property type="match status" value="1"/>
</dbReference>
<dbReference type="PANTHER" id="PTHR46986">
    <property type="entry name" value="ENDORIBONUCLEASE YBEY, CHLOROPLASTIC"/>
    <property type="match status" value="1"/>
</dbReference>
<dbReference type="PANTHER" id="PTHR46986:SF1">
    <property type="entry name" value="ENDORIBONUCLEASE YBEY, CHLOROPLASTIC"/>
    <property type="match status" value="1"/>
</dbReference>
<dbReference type="Pfam" id="PF02130">
    <property type="entry name" value="YbeY"/>
    <property type="match status" value="1"/>
</dbReference>
<dbReference type="SUPFAM" id="SSF55486">
    <property type="entry name" value="Metalloproteases ('zincins'), catalytic domain"/>
    <property type="match status" value="1"/>
</dbReference>
<dbReference type="PROSITE" id="PS01306">
    <property type="entry name" value="UPF0054"/>
    <property type="match status" value="1"/>
</dbReference>
<proteinExistence type="inferred from homology"/>
<evidence type="ECO:0000255" key="1">
    <source>
        <dbReference type="HAMAP-Rule" id="MF_00009"/>
    </source>
</evidence>
<sequence length="155" mass="18409">MRFLITNEVKSVFNDEIYLQRFEQIANLISIKLNIDKERFFECHFVDEKTIQEINRDYRNKDYITDVISFAFDDGEIITPLLGEMYICYQKVVNQAKEFGHSFERELCFLFTHGLLHLLGYDHIEVEEEKIMFGLQDEILNELNITRNVNGNKNG</sequence>
<comment type="function">
    <text evidence="1">Single strand-specific metallo-endoribonuclease involved in late-stage 70S ribosome quality control and in maturation of the 3' terminus of the 16S rRNA.</text>
</comment>
<comment type="cofactor">
    <cofactor evidence="1">
        <name>Zn(2+)</name>
        <dbReference type="ChEBI" id="CHEBI:29105"/>
    </cofactor>
    <text evidence="1">Binds 1 zinc ion.</text>
</comment>
<comment type="subcellular location">
    <subcellularLocation>
        <location evidence="1">Cytoplasm</location>
    </subcellularLocation>
</comment>
<comment type="similarity">
    <text evidence="1">Belongs to the endoribonuclease YbeY family.</text>
</comment>
<name>YBEY_UREU1</name>
<keyword id="KW-0963">Cytoplasm</keyword>
<keyword id="KW-0255">Endonuclease</keyword>
<keyword id="KW-0378">Hydrolase</keyword>
<keyword id="KW-0479">Metal-binding</keyword>
<keyword id="KW-0540">Nuclease</keyword>
<keyword id="KW-0690">Ribosome biogenesis</keyword>
<keyword id="KW-0698">rRNA processing</keyword>
<keyword id="KW-0862">Zinc</keyword>
<accession>B5ZBZ7</accession>